<reference key="1">
    <citation type="submission" date="2007-06" db="EMBL/GenBank/DDBJ databases">
        <authorList>
            <consortium name="NIH - Mammalian Gene Collection (MGC) project"/>
        </authorList>
    </citation>
    <scope>NUCLEOTIDE SEQUENCE [LARGE SCALE MRNA]</scope>
    <source>
        <strain>Hereford</strain>
        <tissue>Fetal lung</tissue>
    </source>
</reference>
<sequence length="370" mass="42469">MAQGWAGFSEEELRRLKQTKDPFEPQRRLPGKKSRQQLQRERALQEQSQKFGLQDGSTSLPPEQLLSAPKQRFNTQRPYSSPPTPLTLTSPVGDGKPQGTESQQKELGLKNSHEVHKNAEVLPLKADCQLEKKKVELQEKSRWEVLQQEQRLMEEKNKRKKALLAKAIAERSKRTQAETMKLKRIQKELQALDDMVSADIGILRNRIDQASLDYSYARKRFDRAEAEYVTAKLELQRKTELKEQLTEHLCTIIQQNELRKAKKLEELMQQLDVHADEETLELKVEVERLLCEQEAEARKQVVHLERSFQPSGESVTLELAKENKKPQDQAASPKVDEQGKNSNSIALLDPERPNQEVETAVKDISASLIT</sequence>
<feature type="chain" id="PRO_0000367458" description="RAB6-interacting golgin">
    <location>
        <begin position="1"/>
        <end position="370"/>
    </location>
</feature>
<feature type="region of interest" description="Disordered" evidence="4">
    <location>
        <begin position="1"/>
        <end position="106"/>
    </location>
</feature>
<feature type="region of interest" description="Necessary for interaction with RCHY1" evidence="1">
    <location>
        <begin position="185"/>
        <end position="370"/>
    </location>
</feature>
<feature type="region of interest" description="Disordered" evidence="4">
    <location>
        <begin position="320"/>
        <end position="370"/>
    </location>
</feature>
<feature type="coiled-coil region" evidence="3">
    <location>
        <begin position="142"/>
        <end position="284"/>
    </location>
</feature>
<feature type="compositionally biased region" description="Basic and acidic residues" evidence="4">
    <location>
        <begin position="11"/>
        <end position="27"/>
    </location>
</feature>
<feature type="compositionally biased region" description="Basic and acidic residues" evidence="4">
    <location>
        <begin position="349"/>
        <end position="361"/>
    </location>
</feature>
<proteinExistence type="evidence at transcript level"/>
<comment type="subunit">
    <text evidence="1">Interacts with RCHY1, RAB6A/RAB6 and SCYL1.</text>
</comment>
<comment type="subcellular location">
    <subcellularLocation>
        <location evidence="2">Cytoplasm</location>
    </subcellularLocation>
    <subcellularLocation>
        <location evidence="2">Golgi apparatus</location>
    </subcellularLocation>
</comment>
<comment type="similarity">
    <text evidence="5">Belongs to the GORAB family.</text>
</comment>
<comment type="sequence caution" evidence="5">
    <conflict type="erroneous initiation">
        <sequence resource="EMBL-CDS" id="AAI42524"/>
    </conflict>
</comment>
<accession>A5PKK7</accession>
<protein>
    <recommendedName>
        <fullName>RAB6-interacting golgin</fullName>
    </recommendedName>
    <alternativeName>
        <fullName>N-terminal kinase-like-binding protein 1</fullName>
        <shortName>NTKL-BP1</shortName>
        <shortName>NTKL-binding protein 1</shortName>
    </alternativeName>
    <alternativeName>
        <fullName>SCY1-like 1-binding protein 1</fullName>
        <shortName>SCYL1-BP1</shortName>
        <shortName>SCYL1-binding protein 1</shortName>
    </alternativeName>
</protein>
<organism>
    <name type="scientific">Bos taurus</name>
    <name type="common">Bovine</name>
    <dbReference type="NCBI Taxonomy" id="9913"/>
    <lineage>
        <taxon>Eukaryota</taxon>
        <taxon>Metazoa</taxon>
        <taxon>Chordata</taxon>
        <taxon>Craniata</taxon>
        <taxon>Vertebrata</taxon>
        <taxon>Euteleostomi</taxon>
        <taxon>Mammalia</taxon>
        <taxon>Eutheria</taxon>
        <taxon>Laurasiatheria</taxon>
        <taxon>Artiodactyla</taxon>
        <taxon>Ruminantia</taxon>
        <taxon>Pecora</taxon>
        <taxon>Bovidae</taxon>
        <taxon>Bovinae</taxon>
        <taxon>Bos</taxon>
    </lineage>
</organism>
<dbReference type="EMBL" id="BC142523">
    <property type="protein sequence ID" value="AAI42524.1"/>
    <property type="status" value="ALT_INIT"/>
    <property type="molecule type" value="mRNA"/>
</dbReference>
<dbReference type="SMR" id="A5PKK7"/>
<dbReference type="FunCoup" id="A5PKK7">
    <property type="interactions" value="2480"/>
</dbReference>
<dbReference type="STRING" id="9913.ENSBTAP00000050555"/>
<dbReference type="PaxDb" id="9913-ENSBTAP00000050555"/>
<dbReference type="eggNOG" id="ENOG502R60M">
    <property type="taxonomic scope" value="Eukaryota"/>
</dbReference>
<dbReference type="InParanoid" id="A5PKK7"/>
<dbReference type="OrthoDB" id="9909311at2759"/>
<dbReference type="Proteomes" id="UP000009136">
    <property type="component" value="Unplaced"/>
</dbReference>
<dbReference type="GO" id="GO:0005794">
    <property type="term" value="C:Golgi apparatus"/>
    <property type="evidence" value="ECO:0007669"/>
    <property type="project" value="UniProtKB-SubCell"/>
</dbReference>
<dbReference type="GO" id="GO:1905515">
    <property type="term" value="P:non-motile cilium assembly"/>
    <property type="evidence" value="ECO:0000318"/>
    <property type="project" value="GO_Central"/>
</dbReference>
<dbReference type="InterPro" id="IPR007033">
    <property type="entry name" value="GORAB"/>
</dbReference>
<dbReference type="PANTHER" id="PTHR21470:SF2">
    <property type="entry name" value="RAB6-INTERACTING GOLGIN"/>
    <property type="match status" value="1"/>
</dbReference>
<dbReference type="PANTHER" id="PTHR21470">
    <property type="entry name" value="RAB6-INTERACTING PROTEIN GORAB"/>
    <property type="match status" value="1"/>
</dbReference>
<dbReference type="Pfam" id="PF04949">
    <property type="entry name" value="Transcrip_act"/>
    <property type="match status" value="1"/>
</dbReference>
<keyword id="KW-0175">Coiled coil</keyword>
<keyword id="KW-0963">Cytoplasm</keyword>
<keyword id="KW-0333">Golgi apparatus</keyword>
<keyword id="KW-1185">Reference proteome</keyword>
<gene>
    <name type="primary">GORAB</name>
    <name type="synonym">SCYL1BP1</name>
</gene>
<name>GORAB_BOVIN</name>
<evidence type="ECO:0000250" key="1"/>
<evidence type="ECO:0000250" key="2">
    <source>
        <dbReference type="UniProtKB" id="Q5T7V8"/>
    </source>
</evidence>
<evidence type="ECO:0000255" key="3"/>
<evidence type="ECO:0000256" key="4">
    <source>
        <dbReference type="SAM" id="MobiDB-lite"/>
    </source>
</evidence>
<evidence type="ECO:0000305" key="5"/>